<proteinExistence type="inferred from homology"/>
<comment type="function">
    <text evidence="1">One of the proteins required for the normal export of preproteins out of the cell cytoplasm. It is a molecular chaperone that binds to a subset of precursor proteins, maintaining them in a translocation-competent state. It also specifically binds to its receptor SecA.</text>
</comment>
<comment type="subunit">
    <text evidence="1">Homotetramer, a dimer of dimers. One homotetramer interacts with 1 SecA dimer.</text>
</comment>
<comment type="subcellular location">
    <subcellularLocation>
        <location evidence="1">Cytoplasm</location>
    </subcellularLocation>
</comment>
<comment type="similarity">
    <text evidence="1">Belongs to the SecB family.</text>
</comment>
<name>SECB_ACTSZ</name>
<accession>A6VLB7</accession>
<feature type="chain" id="PRO_0000318216" description="Protein-export protein SecB">
    <location>
        <begin position="1"/>
        <end position="166"/>
    </location>
</feature>
<sequence>MTDENQAAPAEQAQEPVLQIQRIYVKDVSFEAPNLPDIFQQEWKPNLNFDLGTEAKQLGENLFEVTLNVSVETTLEDSGDAAFICEVKQAGVFTIGGLTDIQLTHALTSQCPNMLFPYARELVASLVNRGTFPPLNLAPVNFDALFLEHMRRVEEESAPEEQPTLN</sequence>
<gene>
    <name evidence="1" type="primary">secB</name>
    <name type="ordered locus">Asuc_0386</name>
</gene>
<protein>
    <recommendedName>
        <fullName evidence="1">Protein-export protein SecB</fullName>
    </recommendedName>
</protein>
<reference key="1">
    <citation type="journal article" date="2010" name="BMC Genomics">
        <title>A genomic perspective on the potential of Actinobacillus succinogenes for industrial succinate production.</title>
        <authorList>
            <person name="McKinlay J.B."/>
            <person name="Laivenieks M."/>
            <person name="Schindler B.D."/>
            <person name="McKinlay A.A."/>
            <person name="Siddaramappa S."/>
            <person name="Challacombe J.F."/>
            <person name="Lowry S.R."/>
            <person name="Clum A."/>
            <person name="Lapidus A.L."/>
            <person name="Burkhart K.B."/>
            <person name="Harkins V."/>
            <person name="Vieille C."/>
        </authorList>
    </citation>
    <scope>NUCLEOTIDE SEQUENCE [LARGE SCALE GENOMIC DNA]</scope>
    <source>
        <strain>ATCC 55618 / DSM 22257 / CCUG 43843 / 130Z</strain>
    </source>
</reference>
<organism>
    <name type="scientific">Actinobacillus succinogenes (strain ATCC 55618 / DSM 22257 / CCUG 43843 / 130Z)</name>
    <dbReference type="NCBI Taxonomy" id="339671"/>
    <lineage>
        <taxon>Bacteria</taxon>
        <taxon>Pseudomonadati</taxon>
        <taxon>Pseudomonadota</taxon>
        <taxon>Gammaproteobacteria</taxon>
        <taxon>Pasteurellales</taxon>
        <taxon>Pasteurellaceae</taxon>
        <taxon>Actinobacillus</taxon>
    </lineage>
</organism>
<keyword id="KW-0143">Chaperone</keyword>
<keyword id="KW-0963">Cytoplasm</keyword>
<keyword id="KW-0653">Protein transport</keyword>
<keyword id="KW-1185">Reference proteome</keyword>
<keyword id="KW-0811">Translocation</keyword>
<keyword id="KW-0813">Transport</keyword>
<evidence type="ECO:0000255" key="1">
    <source>
        <dbReference type="HAMAP-Rule" id="MF_00821"/>
    </source>
</evidence>
<dbReference type="EMBL" id="CP000746">
    <property type="protein sequence ID" value="ABR73764.1"/>
    <property type="molecule type" value="Genomic_DNA"/>
</dbReference>
<dbReference type="RefSeq" id="WP_012072149.1">
    <property type="nucleotide sequence ID" value="NC_009655.1"/>
</dbReference>
<dbReference type="SMR" id="A6VLB7"/>
<dbReference type="STRING" id="339671.Asuc_0386"/>
<dbReference type="KEGG" id="asu:Asuc_0386"/>
<dbReference type="eggNOG" id="COG1952">
    <property type="taxonomic scope" value="Bacteria"/>
</dbReference>
<dbReference type="HOGENOM" id="CLU_111574_1_0_6"/>
<dbReference type="OrthoDB" id="9795145at2"/>
<dbReference type="Proteomes" id="UP000001114">
    <property type="component" value="Chromosome"/>
</dbReference>
<dbReference type="GO" id="GO:0005737">
    <property type="term" value="C:cytoplasm"/>
    <property type="evidence" value="ECO:0007669"/>
    <property type="project" value="UniProtKB-SubCell"/>
</dbReference>
<dbReference type="GO" id="GO:0051082">
    <property type="term" value="F:unfolded protein binding"/>
    <property type="evidence" value="ECO:0007669"/>
    <property type="project" value="InterPro"/>
</dbReference>
<dbReference type="GO" id="GO:0006457">
    <property type="term" value="P:protein folding"/>
    <property type="evidence" value="ECO:0007669"/>
    <property type="project" value="UniProtKB-UniRule"/>
</dbReference>
<dbReference type="GO" id="GO:0051262">
    <property type="term" value="P:protein tetramerization"/>
    <property type="evidence" value="ECO:0007669"/>
    <property type="project" value="InterPro"/>
</dbReference>
<dbReference type="GO" id="GO:0015031">
    <property type="term" value="P:protein transport"/>
    <property type="evidence" value="ECO:0007669"/>
    <property type="project" value="UniProtKB-UniRule"/>
</dbReference>
<dbReference type="CDD" id="cd00557">
    <property type="entry name" value="Translocase_SecB"/>
    <property type="match status" value="1"/>
</dbReference>
<dbReference type="Gene3D" id="3.10.420.10">
    <property type="entry name" value="SecB-like"/>
    <property type="match status" value="1"/>
</dbReference>
<dbReference type="HAMAP" id="MF_00821">
    <property type="entry name" value="SecB"/>
    <property type="match status" value="1"/>
</dbReference>
<dbReference type="InterPro" id="IPR003708">
    <property type="entry name" value="SecB"/>
</dbReference>
<dbReference type="InterPro" id="IPR035958">
    <property type="entry name" value="SecB-like_sf"/>
</dbReference>
<dbReference type="NCBIfam" id="NF004393">
    <property type="entry name" value="PRK05751.1-4"/>
    <property type="match status" value="1"/>
</dbReference>
<dbReference type="NCBIfam" id="TIGR00809">
    <property type="entry name" value="secB"/>
    <property type="match status" value="1"/>
</dbReference>
<dbReference type="PANTHER" id="PTHR36918">
    <property type="match status" value="1"/>
</dbReference>
<dbReference type="PANTHER" id="PTHR36918:SF1">
    <property type="entry name" value="PROTEIN-EXPORT PROTEIN SECB"/>
    <property type="match status" value="1"/>
</dbReference>
<dbReference type="Pfam" id="PF02556">
    <property type="entry name" value="SecB"/>
    <property type="match status" value="1"/>
</dbReference>
<dbReference type="PRINTS" id="PR01594">
    <property type="entry name" value="SECBCHAPRONE"/>
</dbReference>
<dbReference type="SUPFAM" id="SSF54611">
    <property type="entry name" value="SecB-like"/>
    <property type="match status" value="1"/>
</dbReference>